<feature type="chain" id="PRO_1000189957" description="Enolase">
    <location>
        <begin position="1"/>
        <end position="427"/>
    </location>
</feature>
<feature type="active site" description="Proton donor" evidence="1">
    <location>
        <position position="205"/>
    </location>
</feature>
<feature type="active site" description="Proton acceptor" evidence="1">
    <location>
        <position position="337"/>
    </location>
</feature>
<feature type="binding site" evidence="1">
    <location>
        <position position="163"/>
    </location>
    <ligand>
        <name>(2R)-2-phosphoglycerate</name>
        <dbReference type="ChEBI" id="CHEBI:58289"/>
    </ligand>
</feature>
<feature type="binding site" evidence="1">
    <location>
        <position position="242"/>
    </location>
    <ligand>
        <name>Mg(2+)</name>
        <dbReference type="ChEBI" id="CHEBI:18420"/>
    </ligand>
</feature>
<feature type="binding site" evidence="1">
    <location>
        <position position="285"/>
    </location>
    <ligand>
        <name>Mg(2+)</name>
        <dbReference type="ChEBI" id="CHEBI:18420"/>
    </ligand>
</feature>
<feature type="binding site" evidence="1">
    <location>
        <position position="312"/>
    </location>
    <ligand>
        <name>Mg(2+)</name>
        <dbReference type="ChEBI" id="CHEBI:18420"/>
    </ligand>
</feature>
<feature type="binding site" evidence="1">
    <location>
        <position position="337"/>
    </location>
    <ligand>
        <name>(2R)-2-phosphoglycerate</name>
        <dbReference type="ChEBI" id="CHEBI:58289"/>
    </ligand>
</feature>
<feature type="binding site" evidence="1">
    <location>
        <position position="366"/>
    </location>
    <ligand>
        <name>(2R)-2-phosphoglycerate</name>
        <dbReference type="ChEBI" id="CHEBI:58289"/>
    </ligand>
</feature>
<feature type="binding site" evidence="1">
    <location>
        <position position="367"/>
    </location>
    <ligand>
        <name>(2R)-2-phosphoglycerate</name>
        <dbReference type="ChEBI" id="CHEBI:58289"/>
    </ligand>
</feature>
<feature type="binding site" evidence="1">
    <location>
        <position position="388"/>
    </location>
    <ligand>
        <name>(2R)-2-phosphoglycerate</name>
        <dbReference type="ChEBI" id="CHEBI:58289"/>
    </ligand>
</feature>
<reference key="1">
    <citation type="journal article" date="2010" name="J. Bacteriol.">
        <title>Complete genome sequence of the aerobic facultative methanotroph Methylocella silvestris BL2.</title>
        <authorList>
            <person name="Chen Y."/>
            <person name="Crombie A."/>
            <person name="Rahman M.T."/>
            <person name="Dedysh S.N."/>
            <person name="Liesack W."/>
            <person name="Stott M.B."/>
            <person name="Alam M."/>
            <person name="Theisen A.R."/>
            <person name="Murrell J.C."/>
            <person name="Dunfield P.F."/>
        </authorList>
    </citation>
    <scope>NUCLEOTIDE SEQUENCE [LARGE SCALE GENOMIC DNA]</scope>
    <source>
        <strain>DSM 15510 / CIP 108128 / LMG 27833 / NCIMB 13906 / BL2</strain>
    </source>
</reference>
<dbReference type="EC" id="4.2.1.11" evidence="1"/>
<dbReference type="EMBL" id="CP001280">
    <property type="protein sequence ID" value="ACK49487.1"/>
    <property type="molecule type" value="Genomic_DNA"/>
</dbReference>
<dbReference type="RefSeq" id="WP_012589557.1">
    <property type="nucleotide sequence ID" value="NC_011666.1"/>
</dbReference>
<dbReference type="SMR" id="B8EJT3"/>
<dbReference type="STRING" id="395965.Msil_0515"/>
<dbReference type="KEGG" id="msl:Msil_0515"/>
<dbReference type="eggNOG" id="COG0148">
    <property type="taxonomic scope" value="Bacteria"/>
</dbReference>
<dbReference type="HOGENOM" id="CLU_031223_2_1_5"/>
<dbReference type="OrthoDB" id="9804716at2"/>
<dbReference type="UniPathway" id="UPA00109">
    <property type="reaction ID" value="UER00187"/>
</dbReference>
<dbReference type="Proteomes" id="UP000002257">
    <property type="component" value="Chromosome"/>
</dbReference>
<dbReference type="GO" id="GO:0009986">
    <property type="term" value="C:cell surface"/>
    <property type="evidence" value="ECO:0007669"/>
    <property type="project" value="UniProtKB-SubCell"/>
</dbReference>
<dbReference type="GO" id="GO:0005576">
    <property type="term" value="C:extracellular region"/>
    <property type="evidence" value="ECO:0007669"/>
    <property type="project" value="UniProtKB-SubCell"/>
</dbReference>
<dbReference type="GO" id="GO:0000015">
    <property type="term" value="C:phosphopyruvate hydratase complex"/>
    <property type="evidence" value="ECO:0007669"/>
    <property type="project" value="InterPro"/>
</dbReference>
<dbReference type="GO" id="GO:0000287">
    <property type="term" value="F:magnesium ion binding"/>
    <property type="evidence" value="ECO:0007669"/>
    <property type="project" value="UniProtKB-UniRule"/>
</dbReference>
<dbReference type="GO" id="GO:0004634">
    <property type="term" value="F:phosphopyruvate hydratase activity"/>
    <property type="evidence" value="ECO:0007669"/>
    <property type="project" value="UniProtKB-UniRule"/>
</dbReference>
<dbReference type="GO" id="GO:0006096">
    <property type="term" value="P:glycolytic process"/>
    <property type="evidence" value="ECO:0007669"/>
    <property type="project" value="UniProtKB-UniRule"/>
</dbReference>
<dbReference type="CDD" id="cd03313">
    <property type="entry name" value="enolase"/>
    <property type="match status" value="1"/>
</dbReference>
<dbReference type="FunFam" id="3.20.20.120:FF:000001">
    <property type="entry name" value="Enolase"/>
    <property type="match status" value="1"/>
</dbReference>
<dbReference type="FunFam" id="3.30.390.10:FF:000001">
    <property type="entry name" value="Enolase"/>
    <property type="match status" value="1"/>
</dbReference>
<dbReference type="Gene3D" id="3.20.20.120">
    <property type="entry name" value="Enolase-like C-terminal domain"/>
    <property type="match status" value="1"/>
</dbReference>
<dbReference type="Gene3D" id="3.30.390.10">
    <property type="entry name" value="Enolase-like, N-terminal domain"/>
    <property type="match status" value="1"/>
</dbReference>
<dbReference type="HAMAP" id="MF_00318">
    <property type="entry name" value="Enolase"/>
    <property type="match status" value="1"/>
</dbReference>
<dbReference type="InterPro" id="IPR000941">
    <property type="entry name" value="Enolase"/>
</dbReference>
<dbReference type="InterPro" id="IPR036849">
    <property type="entry name" value="Enolase-like_C_sf"/>
</dbReference>
<dbReference type="InterPro" id="IPR029017">
    <property type="entry name" value="Enolase-like_N"/>
</dbReference>
<dbReference type="InterPro" id="IPR020810">
    <property type="entry name" value="Enolase_C"/>
</dbReference>
<dbReference type="InterPro" id="IPR020809">
    <property type="entry name" value="Enolase_CS"/>
</dbReference>
<dbReference type="InterPro" id="IPR020811">
    <property type="entry name" value="Enolase_N"/>
</dbReference>
<dbReference type="NCBIfam" id="TIGR01060">
    <property type="entry name" value="eno"/>
    <property type="match status" value="1"/>
</dbReference>
<dbReference type="PANTHER" id="PTHR11902">
    <property type="entry name" value="ENOLASE"/>
    <property type="match status" value="1"/>
</dbReference>
<dbReference type="PANTHER" id="PTHR11902:SF1">
    <property type="entry name" value="ENOLASE"/>
    <property type="match status" value="1"/>
</dbReference>
<dbReference type="Pfam" id="PF00113">
    <property type="entry name" value="Enolase_C"/>
    <property type="match status" value="1"/>
</dbReference>
<dbReference type="Pfam" id="PF03952">
    <property type="entry name" value="Enolase_N"/>
    <property type="match status" value="1"/>
</dbReference>
<dbReference type="PIRSF" id="PIRSF001400">
    <property type="entry name" value="Enolase"/>
    <property type="match status" value="1"/>
</dbReference>
<dbReference type="PRINTS" id="PR00148">
    <property type="entry name" value="ENOLASE"/>
</dbReference>
<dbReference type="SFLD" id="SFLDF00002">
    <property type="entry name" value="enolase"/>
    <property type="match status" value="1"/>
</dbReference>
<dbReference type="SFLD" id="SFLDG00178">
    <property type="entry name" value="enolase"/>
    <property type="match status" value="1"/>
</dbReference>
<dbReference type="SMART" id="SM01192">
    <property type="entry name" value="Enolase_C"/>
    <property type="match status" value="1"/>
</dbReference>
<dbReference type="SMART" id="SM01193">
    <property type="entry name" value="Enolase_N"/>
    <property type="match status" value="1"/>
</dbReference>
<dbReference type="SUPFAM" id="SSF51604">
    <property type="entry name" value="Enolase C-terminal domain-like"/>
    <property type="match status" value="1"/>
</dbReference>
<dbReference type="SUPFAM" id="SSF54826">
    <property type="entry name" value="Enolase N-terminal domain-like"/>
    <property type="match status" value="1"/>
</dbReference>
<dbReference type="PROSITE" id="PS00164">
    <property type="entry name" value="ENOLASE"/>
    <property type="match status" value="1"/>
</dbReference>
<sequence length="427" mass="44954">MTAIIDIAAREILDSRGNPTVEVDVTLEDGSHGRAAVPSGASTGAHEAVELRDGDKSRYGGKGVLKAIENVNRDIFEALSGLEAEDQGRIDEIMISLDGTPNKSKLGANAILGVSLAVAKAAADASALPLYRYVGGVQAHVLPVPMMNIINGGVHADNPIDFQEFMILPVGAPSIAEAVRWGSEVFQLLKSSLKKAGHNTNVGDEGGFAPNLPSAEAALDFCVQAIEAAGFKPGVDIFLGLDCAATEFFKDGAYVYSGEGVTRSPEEQANYLAKLSASYPIASIEDGMSEDDWAGWKAVTELIGSKIQLVGDDLFVTNVTRLEEGIKKGIANSILVKVNQIGSLTETLAAVDMAQRAGYTAVMSHRSGETEDSTIADLAVATNCGQIKTGSLARSDRTAKYNQLIRIEEELGSQARYAGLKALKALA</sequence>
<name>ENO_METSB</name>
<accession>B8EJT3</accession>
<organism>
    <name type="scientific">Methylocella silvestris (strain DSM 15510 / CIP 108128 / LMG 27833 / NCIMB 13906 / BL2)</name>
    <dbReference type="NCBI Taxonomy" id="395965"/>
    <lineage>
        <taxon>Bacteria</taxon>
        <taxon>Pseudomonadati</taxon>
        <taxon>Pseudomonadota</taxon>
        <taxon>Alphaproteobacteria</taxon>
        <taxon>Hyphomicrobiales</taxon>
        <taxon>Beijerinckiaceae</taxon>
        <taxon>Methylocella</taxon>
    </lineage>
</organism>
<protein>
    <recommendedName>
        <fullName evidence="1">Enolase</fullName>
        <ecNumber evidence="1">4.2.1.11</ecNumber>
    </recommendedName>
    <alternativeName>
        <fullName evidence="1">2-phospho-D-glycerate hydro-lyase</fullName>
    </alternativeName>
    <alternativeName>
        <fullName evidence="1">2-phosphoglycerate dehydratase</fullName>
    </alternativeName>
</protein>
<gene>
    <name evidence="1" type="primary">eno</name>
    <name type="ordered locus">Msil_0515</name>
</gene>
<keyword id="KW-0963">Cytoplasm</keyword>
<keyword id="KW-0324">Glycolysis</keyword>
<keyword id="KW-0456">Lyase</keyword>
<keyword id="KW-0460">Magnesium</keyword>
<keyword id="KW-0479">Metal-binding</keyword>
<keyword id="KW-1185">Reference proteome</keyword>
<keyword id="KW-0964">Secreted</keyword>
<evidence type="ECO:0000255" key="1">
    <source>
        <dbReference type="HAMAP-Rule" id="MF_00318"/>
    </source>
</evidence>
<proteinExistence type="inferred from homology"/>
<comment type="function">
    <text evidence="1">Catalyzes the reversible conversion of 2-phosphoglycerate (2-PG) into phosphoenolpyruvate (PEP). It is essential for the degradation of carbohydrates via glycolysis.</text>
</comment>
<comment type="catalytic activity">
    <reaction evidence="1">
        <text>(2R)-2-phosphoglycerate = phosphoenolpyruvate + H2O</text>
        <dbReference type="Rhea" id="RHEA:10164"/>
        <dbReference type="ChEBI" id="CHEBI:15377"/>
        <dbReference type="ChEBI" id="CHEBI:58289"/>
        <dbReference type="ChEBI" id="CHEBI:58702"/>
        <dbReference type="EC" id="4.2.1.11"/>
    </reaction>
</comment>
<comment type="cofactor">
    <cofactor evidence="1">
        <name>Mg(2+)</name>
        <dbReference type="ChEBI" id="CHEBI:18420"/>
    </cofactor>
    <text evidence="1">Binds a second Mg(2+) ion via substrate during catalysis.</text>
</comment>
<comment type="pathway">
    <text evidence="1">Carbohydrate degradation; glycolysis; pyruvate from D-glyceraldehyde 3-phosphate: step 4/5.</text>
</comment>
<comment type="subcellular location">
    <subcellularLocation>
        <location evidence="1">Cytoplasm</location>
    </subcellularLocation>
    <subcellularLocation>
        <location evidence="1">Secreted</location>
    </subcellularLocation>
    <subcellularLocation>
        <location evidence="1">Cell surface</location>
    </subcellularLocation>
    <text evidence="1">Fractions of enolase are present in both the cytoplasm and on the cell surface.</text>
</comment>
<comment type="similarity">
    <text evidence="1">Belongs to the enolase family.</text>
</comment>